<name>MED22_YARLI</name>
<proteinExistence type="inferred from homology"/>
<feature type="chain" id="PRO_0000308579" description="Mediator of RNA polymerase II transcription subunit 22">
    <location>
        <begin position="1"/>
        <end position="112"/>
    </location>
</feature>
<feature type="region of interest" description="Disordered" evidence="2">
    <location>
        <begin position="83"/>
        <end position="112"/>
    </location>
</feature>
<feature type="compositionally biased region" description="Basic and acidic residues" evidence="2">
    <location>
        <begin position="96"/>
        <end position="112"/>
    </location>
</feature>
<protein>
    <recommendedName>
        <fullName>Mediator of RNA polymerase II transcription subunit 22</fullName>
    </recommendedName>
    <alternativeName>
        <fullName>Mediator complex subunit 22</fullName>
    </alternativeName>
</protein>
<gene>
    <name type="primary">SRB6</name>
    <name type="synonym">MED22</name>
    <name type="ordered locus">YALI0F10483g</name>
</gene>
<reference key="1">
    <citation type="journal article" date="2004" name="Nature">
        <title>Genome evolution in yeasts.</title>
        <authorList>
            <person name="Dujon B."/>
            <person name="Sherman D."/>
            <person name="Fischer G."/>
            <person name="Durrens P."/>
            <person name="Casaregola S."/>
            <person name="Lafontaine I."/>
            <person name="de Montigny J."/>
            <person name="Marck C."/>
            <person name="Neuveglise C."/>
            <person name="Talla E."/>
            <person name="Goffard N."/>
            <person name="Frangeul L."/>
            <person name="Aigle M."/>
            <person name="Anthouard V."/>
            <person name="Babour A."/>
            <person name="Barbe V."/>
            <person name="Barnay S."/>
            <person name="Blanchin S."/>
            <person name="Beckerich J.-M."/>
            <person name="Beyne E."/>
            <person name="Bleykasten C."/>
            <person name="Boisrame A."/>
            <person name="Boyer J."/>
            <person name="Cattolico L."/>
            <person name="Confanioleri F."/>
            <person name="de Daruvar A."/>
            <person name="Despons L."/>
            <person name="Fabre E."/>
            <person name="Fairhead C."/>
            <person name="Ferry-Dumazet H."/>
            <person name="Groppi A."/>
            <person name="Hantraye F."/>
            <person name="Hennequin C."/>
            <person name="Jauniaux N."/>
            <person name="Joyet P."/>
            <person name="Kachouri R."/>
            <person name="Kerrest A."/>
            <person name="Koszul R."/>
            <person name="Lemaire M."/>
            <person name="Lesur I."/>
            <person name="Ma L."/>
            <person name="Muller H."/>
            <person name="Nicaud J.-M."/>
            <person name="Nikolski M."/>
            <person name="Oztas S."/>
            <person name="Ozier-Kalogeropoulos O."/>
            <person name="Pellenz S."/>
            <person name="Potier S."/>
            <person name="Richard G.-F."/>
            <person name="Straub M.-L."/>
            <person name="Suleau A."/>
            <person name="Swennen D."/>
            <person name="Tekaia F."/>
            <person name="Wesolowski-Louvel M."/>
            <person name="Westhof E."/>
            <person name="Wirth B."/>
            <person name="Zeniou-Meyer M."/>
            <person name="Zivanovic Y."/>
            <person name="Bolotin-Fukuhara M."/>
            <person name="Thierry A."/>
            <person name="Bouchier C."/>
            <person name="Caudron B."/>
            <person name="Scarpelli C."/>
            <person name="Gaillardin C."/>
            <person name="Weissenbach J."/>
            <person name="Wincker P."/>
            <person name="Souciet J.-L."/>
        </authorList>
    </citation>
    <scope>NUCLEOTIDE SEQUENCE [LARGE SCALE GENOMIC DNA]</scope>
    <source>
        <strain>CLIB 122 / E 150</strain>
    </source>
</reference>
<dbReference type="EMBL" id="CR382132">
    <property type="protein sequence ID" value="CAG78054.2"/>
    <property type="molecule type" value="Genomic_DNA"/>
</dbReference>
<dbReference type="RefSeq" id="XP_505247.2">
    <property type="nucleotide sequence ID" value="XM_505247.2"/>
</dbReference>
<dbReference type="SMR" id="Q6C265"/>
<dbReference type="FunCoup" id="Q6C265">
    <property type="interactions" value="137"/>
</dbReference>
<dbReference type="STRING" id="284591.Q6C265"/>
<dbReference type="EnsemblFungi" id="CAG78054">
    <property type="protein sequence ID" value="CAG78054"/>
    <property type="gene ID" value="YALI0_F10483g"/>
</dbReference>
<dbReference type="KEGG" id="yli:2907940"/>
<dbReference type="VEuPathDB" id="FungiDB:YALI0_F10483g"/>
<dbReference type="HOGENOM" id="CLU_153329_0_0_1"/>
<dbReference type="InParanoid" id="Q6C265"/>
<dbReference type="OMA" id="HNRINAN"/>
<dbReference type="OrthoDB" id="3776at4891"/>
<dbReference type="Proteomes" id="UP000001300">
    <property type="component" value="Chromosome F"/>
</dbReference>
<dbReference type="GO" id="GO:0016592">
    <property type="term" value="C:mediator complex"/>
    <property type="evidence" value="ECO:0000318"/>
    <property type="project" value="GO_Central"/>
</dbReference>
<dbReference type="GO" id="GO:0003712">
    <property type="term" value="F:transcription coregulator activity"/>
    <property type="evidence" value="ECO:0007669"/>
    <property type="project" value="InterPro"/>
</dbReference>
<dbReference type="GO" id="GO:0006357">
    <property type="term" value="P:regulation of transcription by RNA polymerase II"/>
    <property type="evidence" value="ECO:0007669"/>
    <property type="project" value="InterPro"/>
</dbReference>
<dbReference type="Gene3D" id="6.10.280.160">
    <property type="entry name" value="Mediator of RNA polymerase II transcription subunit 22"/>
    <property type="match status" value="1"/>
</dbReference>
<dbReference type="InterPro" id="IPR009332">
    <property type="entry name" value="Med22"/>
</dbReference>
<dbReference type="PANTHER" id="PTHR12434">
    <property type="entry name" value="MEDIATOR OF RNA POLYMERASE II TRANSCRIPTION SUBUNIT 22"/>
    <property type="match status" value="1"/>
</dbReference>
<dbReference type="PANTHER" id="PTHR12434:SF6">
    <property type="entry name" value="MEDIATOR OF RNA POLYMERASE II TRANSCRIPTION SUBUNIT 22"/>
    <property type="match status" value="1"/>
</dbReference>
<dbReference type="Pfam" id="PF06179">
    <property type="entry name" value="Med22"/>
    <property type="match status" value="1"/>
</dbReference>
<evidence type="ECO:0000250" key="1"/>
<evidence type="ECO:0000256" key="2">
    <source>
        <dbReference type="SAM" id="MobiDB-lite"/>
    </source>
</evidence>
<evidence type="ECO:0000305" key="3"/>
<accession>Q6C265</accession>
<comment type="function">
    <text evidence="1">Component of the Mediator complex, a coactivator involved in the regulated transcription of nearly all RNA polymerase II-dependent genes. Mediator functions as a bridge to convey information from gene-specific regulatory proteins to the basal RNA polymerase II transcription machinery. Mediator is recruited to promoters by direct interactions with regulatory proteins and serves as a scaffold for the assembly of a functional preinitiation complex with RNA polymerase II and the general transcription factors (By similarity).</text>
</comment>
<comment type="subunit">
    <text evidence="1">Component of the Mediator complex.</text>
</comment>
<comment type="subcellular location">
    <subcellularLocation>
        <location evidence="1">Nucleus</location>
    </subcellularLocation>
</comment>
<comment type="similarity">
    <text evidence="3">Belongs to the Mediator complex subunit 22 family.</text>
</comment>
<keyword id="KW-0010">Activator</keyword>
<keyword id="KW-0539">Nucleus</keyword>
<keyword id="KW-1185">Reference proteome</keyword>
<keyword id="KW-0804">Transcription</keyword>
<keyword id="KW-0805">Transcription regulation</keyword>
<sequence length="112" mass="12347">MSNRSITLLQRVDNATEQLNSKFTDIVNSAKVSSKDKSALAMETYLVEESTSAMVRSLEDLLFVTRSLKEAWILGQIRPVVNKPEDGGEGQLADELLDKIEDTSDGVDKETA</sequence>
<organism>
    <name type="scientific">Yarrowia lipolytica (strain CLIB 122 / E 150)</name>
    <name type="common">Yeast</name>
    <name type="synonym">Candida lipolytica</name>
    <dbReference type="NCBI Taxonomy" id="284591"/>
    <lineage>
        <taxon>Eukaryota</taxon>
        <taxon>Fungi</taxon>
        <taxon>Dikarya</taxon>
        <taxon>Ascomycota</taxon>
        <taxon>Saccharomycotina</taxon>
        <taxon>Dipodascomycetes</taxon>
        <taxon>Dipodascales</taxon>
        <taxon>Dipodascales incertae sedis</taxon>
        <taxon>Yarrowia</taxon>
    </lineage>
</organism>